<feature type="chain" id="PRO_1000136332" description="Protein FixB">
    <location>
        <begin position="1"/>
        <end position="313"/>
    </location>
</feature>
<feature type="binding site" evidence="1">
    <location>
        <begin position="255"/>
        <end position="283"/>
    </location>
    <ligand>
        <name>FAD</name>
        <dbReference type="ChEBI" id="CHEBI:57692"/>
    </ligand>
</feature>
<organism>
    <name type="scientific">Escherichia coli O17:K52:H18 (strain UMN026 / ExPEC)</name>
    <dbReference type="NCBI Taxonomy" id="585056"/>
    <lineage>
        <taxon>Bacteria</taxon>
        <taxon>Pseudomonadati</taxon>
        <taxon>Pseudomonadota</taxon>
        <taxon>Gammaproteobacteria</taxon>
        <taxon>Enterobacterales</taxon>
        <taxon>Enterobacteriaceae</taxon>
        <taxon>Escherichia</taxon>
    </lineage>
</organism>
<gene>
    <name evidence="1" type="primary">fixB</name>
    <name type="ordered locus">ECUMN_0044</name>
</gene>
<accession>B7N7R7</accession>
<proteinExistence type="inferred from homology"/>
<name>FIXB_ECOLU</name>
<dbReference type="EMBL" id="CU928163">
    <property type="protein sequence ID" value="CAR11267.1"/>
    <property type="molecule type" value="Genomic_DNA"/>
</dbReference>
<dbReference type="RefSeq" id="WP_001091478.1">
    <property type="nucleotide sequence ID" value="NC_011751.1"/>
</dbReference>
<dbReference type="RefSeq" id="YP_002410822.1">
    <property type="nucleotide sequence ID" value="NC_011751.1"/>
</dbReference>
<dbReference type="SMR" id="B7N7R7"/>
<dbReference type="STRING" id="585056.ECUMN_0044"/>
<dbReference type="KEGG" id="eum:ECUMN_0044"/>
<dbReference type="PATRIC" id="fig|585056.7.peg.231"/>
<dbReference type="HOGENOM" id="CLU_034178_0_1_6"/>
<dbReference type="UniPathway" id="UPA00117"/>
<dbReference type="Proteomes" id="UP000007097">
    <property type="component" value="Chromosome"/>
</dbReference>
<dbReference type="GO" id="GO:0009055">
    <property type="term" value="F:electron transfer activity"/>
    <property type="evidence" value="ECO:0007669"/>
    <property type="project" value="InterPro"/>
</dbReference>
<dbReference type="GO" id="GO:0050660">
    <property type="term" value="F:flavin adenine dinucleotide binding"/>
    <property type="evidence" value="ECO:0007669"/>
    <property type="project" value="InterPro"/>
</dbReference>
<dbReference type="GO" id="GO:0009437">
    <property type="term" value="P:carnitine metabolic process"/>
    <property type="evidence" value="ECO:0007669"/>
    <property type="project" value="UniProtKB-UniRule"/>
</dbReference>
<dbReference type="GO" id="GO:0033539">
    <property type="term" value="P:fatty acid beta-oxidation using acyl-CoA dehydrogenase"/>
    <property type="evidence" value="ECO:0007669"/>
    <property type="project" value="TreeGrafter"/>
</dbReference>
<dbReference type="FunFam" id="3.40.50.1220:FF:000004">
    <property type="entry name" value="Electron transfer flavoprotein"/>
    <property type="match status" value="1"/>
</dbReference>
<dbReference type="FunFam" id="3.40.50.620:FF:000067">
    <property type="entry name" value="Protein FixB"/>
    <property type="match status" value="1"/>
</dbReference>
<dbReference type="Gene3D" id="3.40.50.620">
    <property type="entry name" value="HUPs"/>
    <property type="match status" value="1"/>
</dbReference>
<dbReference type="Gene3D" id="3.40.50.1220">
    <property type="entry name" value="TPP-binding domain"/>
    <property type="match status" value="1"/>
</dbReference>
<dbReference type="HAMAP" id="MF_01056">
    <property type="entry name" value="FixB"/>
    <property type="match status" value="1"/>
</dbReference>
<dbReference type="InterPro" id="IPR029035">
    <property type="entry name" value="DHS-like_NAD/FAD-binding_dom"/>
</dbReference>
<dbReference type="InterPro" id="IPR014730">
    <property type="entry name" value="ETF_a/b_N"/>
</dbReference>
<dbReference type="InterPro" id="IPR001308">
    <property type="entry name" value="ETF_a/FixB"/>
</dbReference>
<dbReference type="InterPro" id="IPR014731">
    <property type="entry name" value="ETF_asu_C"/>
</dbReference>
<dbReference type="InterPro" id="IPR018206">
    <property type="entry name" value="ETF_asu_C_CS"/>
</dbReference>
<dbReference type="InterPro" id="IPR023461">
    <property type="entry name" value="FixB"/>
</dbReference>
<dbReference type="InterPro" id="IPR014729">
    <property type="entry name" value="Rossmann-like_a/b/a_fold"/>
</dbReference>
<dbReference type="NCBIfam" id="NF002889">
    <property type="entry name" value="PRK03363.1"/>
    <property type="match status" value="1"/>
</dbReference>
<dbReference type="PANTHER" id="PTHR43153">
    <property type="entry name" value="ELECTRON TRANSFER FLAVOPROTEIN ALPHA"/>
    <property type="match status" value="1"/>
</dbReference>
<dbReference type="PANTHER" id="PTHR43153:SF5">
    <property type="entry name" value="PROTEIN FIXB-RELATED"/>
    <property type="match status" value="1"/>
</dbReference>
<dbReference type="Pfam" id="PF01012">
    <property type="entry name" value="ETF"/>
    <property type="match status" value="1"/>
</dbReference>
<dbReference type="Pfam" id="PF00766">
    <property type="entry name" value="ETF_alpha"/>
    <property type="match status" value="1"/>
</dbReference>
<dbReference type="PIRSF" id="PIRSF000089">
    <property type="entry name" value="Electra_flavoP_a"/>
    <property type="match status" value="1"/>
</dbReference>
<dbReference type="SMART" id="SM00893">
    <property type="entry name" value="ETF"/>
    <property type="match status" value="1"/>
</dbReference>
<dbReference type="SUPFAM" id="SSF52402">
    <property type="entry name" value="Adenine nucleotide alpha hydrolases-like"/>
    <property type="match status" value="1"/>
</dbReference>
<dbReference type="SUPFAM" id="SSF52467">
    <property type="entry name" value="DHS-like NAD/FAD-binding domain"/>
    <property type="match status" value="1"/>
</dbReference>
<dbReference type="PROSITE" id="PS00696">
    <property type="entry name" value="ETF_ALPHA"/>
    <property type="match status" value="1"/>
</dbReference>
<comment type="function">
    <text evidence="1">Required for anaerobic carnitine reduction. May bring reductant to CaiA.</text>
</comment>
<comment type="pathway">
    <text evidence="1">Amine and polyamine metabolism; carnitine metabolism.</text>
</comment>
<comment type="subunit">
    <text evidence="1">Heterodimer of FixA and FixB.</text>
</comment>
<comment type="similarity">
    <text evidence="1">Belongs to the ETF alpha-subunit/FixB family.</text>
</comment>
<reference key="1">
    <citation type="journal article" date="2009" name="PLoS Genet.">
        <title>Organised genome dynamics in the Escherichia coli species results in highly diverse adaptive paths.</title>
        <authorList>
            <person name="Touchon M."/>
            <person name="Hoede C."/>
            <person name="Tenaillon O."/>
            <person name="Barbe V."/>
            <person name="Baeriswyl S."/>
            <person name="Bidet P."/>
            <person name="Bingen E."/>
            <person name="Bonacorsi S."/>
            <person name="Bouchier C."/>
            <person name="Bouvet O."/>
            <person name="Calteau A."/>
            <person name="Chiapello H."/>
            <person name="Clermont O."/>
            <person name="Cruveiller S."/>
            <person name="Danchin A."/>
            <person name="Diard M."/>
            <person name="Dossat C."/>
            <person name="Karoui M.E."/>
            <person name="Frapy E."/>
            <person name="Garry L."/>
            <person name="Ghigo J.M."/>
            <person name="Gilles A.M."/>
            <person name="Johnson J."/>
            <person name="Le Bouguenec C."/>
            <person name="Lescat M."/>
            <person name="Mangenot S."/>
            <person name="Martinez-Jehanne V."/>
            <person name="Matic I."/>
            <person name="Nassif X."/>
            <person name="Oztas S."/>
            <person name="Petit M.A."/>
            <person name="Pichon C."/>
            <person name="Rouy Z."/>
            <person name="Ruf C.S."/>
            <person name="Schneider D."/>
            <person name="Tourret J."/>
            <person name="Vacherie B."/>
            <person name="Vallenet D."/>
            <person name="Medigue C."/>
            <person name="Rocha E.P.C."/>
            <person name="Denamur E."/>
        </authorList>
    </citation>
    <scope>NUCLEOTIDE SEQUENCE [LARGE SCALE GENOMIC DNA]</scope>
    <source>
        <strain>UMN026 / ExPEC</strain>
    </source>
</reference>
<sequence length="313" mass="33469">MNTFSQVWVFSDTPSRLPELMNGAQALANQINAFVLNDADGAQAIQLGANHVWKLNGKPDDRMIEDYAGVMADTIRQHGADGLVLLPNTRRGKLLAAKLGYRLKAAVSNDASTVSVQDGKATVKHMVYGGLAIGEERIATPYAVLTISSGTFDAAQPDASRTGETHTVEWQAPAVAITRTATQARQSNSVDLDKARLVVSVGRGIGSKDNIALAEQLCKAIGAELACSRPVAENEKWMEHERYVGISNLMLKPELYLAVGISGQIQHMVGANASQTIFAINKDKNAPIFQYADYGIVGDAVKILPALTAALAR</sequence>
<protein>
    <recommendedName>
        <fullName evidence="1">Protein FixB</fullName>
    </recommendedName>
</protein>
<evidence type="ECO:0000255" key="1">
    <source>
        <dbReference type="HAMAP-Rule" id="MF_01056"/>
    </source>
</evidence>
<keyword id="KW-0249">Electron transport</keyword>
<keyword id="KW-0274">FAD</keyword>
<keyword id="KW-0285">Flavoprotein</keyword>
<keyword id="KW-0813">Transport</keyword>